<keyword id="KW-0963">Cytoplasm</keyword>
<keyword id="KW-0206">Cytoskeleton</keyword>
<keyword id="KW-0493">Microtubule</keyword>
<keyword id="KW-1185">Reference proteome</keyword>
<keyword id="KW-0677">Repeat</keyword>
<keyword id="KW-0802">TPR repeat</keyword>
<reference key="1">
    <citation type="submission" date="2005-11" db="EMBL/GenBank/DDBJ databases">
        <authorList>
            <consortium name="NIH - Mammalian Gene Collection (MGC) project"/>
        </authorList>
    </citation>
    <scope>NUCLEOTIDE SEQUENCE [LARGE SCALE MRNA]</scope>
    <source>
        <strain>Crossbred X Angus</strain>
        <tissue>Liver</tissue>
    </source>
</reference>
<accession>Q32KL4</accession>
<protein>
    <recommendedName>
        <fullName>Regulator of microtubule dynamics protein 1</fullName>
        <shortName>RMD-1</shortName>
    </recommendedName>
    <alternativeName>
        <fullName>Protein FAM82B</fullName>
    </alternativeName>
</protein>
<feature type="chain" id="PRO_0000346794" description="Regulator of microtubule dynamics protein 1">
    <location>
        <begin position="1"/>
        <end position="317"/>
    </location>
</feature>
<feature type="repeat" description="TPR 1">
    <location>
        <begin position="171"/>
        <end position="207"/>
    </location>
</feature>
<feature type="repeat" description="TPR 2">
    <location>
        <begin position="225"/>
        <end position="261"/>
    </location>
</feature>
<feature type="modified residue" description="N6-succinyllysine" evidence="2">
    <location>
        <position position="168"/>
    </location>
</feature>
<dbReference type="EMBL" id="BC110037">
    <property type="protein sequence ID" value="AAI10038.1"/>
    <property type="molecule type" value="mRNA"/>
</dbReference>
<dbReference type="RefSeq" id="NP_001032689.1">
    <property type="nucleotide sequence ID" value="NM_001037600.2"/>
</dbReference>
<dbReference type="SMR" id="Q32KL4"/>
<dbReference type="FunCoup" id="Q32KL4">
    <property type="interactions" value="2167"/>
</dbReference>
<dbReference type="STRING" id="9913.ENSBTAP00000020889"/>
<dbReference type="PaxDb" id="9913-ENSBTAP00000020889"/>
<dbReference type="GeneID" id="513788"/>
<dbReference type="KEGG" id="bta:513788"/>
<dbReference type="CTD" id="51115"/>
<dbReference type="VEuPathDB" id="HostDB:ENSBTAG00000015734"/>
<dbReference type="eggNOG" id="ENOG502QSJV">
    <property type="taxonomic scope" value="Eukaryota"/>
</dbReference>
<dbReference type="HOGENOM" id="CLU_046369_1_1_1"/>
<dbReference type="InParanoid" id="Q32KL4"/>
<dbReference type="OMA" id="HILGVWH"/>
<dbReference type="OrthoDB" id="69711at2759"/>
<dbReference type="TreeFam" id="TF315854"/>
<dbReference type="Proteomes" id="UP000009136">
    <property type="component" value="Chromosome 14"/>
</dbReference>
<dbReference type="Bgee" id="ENSBTAG00000015734">
    <property type="expression patterns" value="Expressed in oocyte and 104 other cell types or tissues"/>
</dbReference>
<dbReference type="GO" id="GO:0005737">
    <property type="term" value="C:cytoplasm"/>
    <property type="evidence" value="ECO:0000318"/>
    <property type="project" value="GO_Central"/>
</dbReference>
<dbReference type="GO" id="GO:0005739">
    <property type="term" value="C:mitochondrion"/>
    <property type="evidence" value="ECO:0000318"/>
    <property type="project" value="GO_Central"/>
</dbReference>
<dbReference type="GO" id="GO:0097431">
    <property type="term" value="C:mitotic spindle pole"/>
    <property type="evidence" value="ECO:0000318"/>
    <property type="project" value="GO_Central"/>
</dbReference>
<dbReference type="GO" id="GO:0005876">
    <property type="term" value="C:spindle microtubule"/>
    <property type="evidence" value="ECO:0000318"/>
    <property type="project" value="GO_Central"/>
</dbReference>
<dbReference type="GO" id="GO:0008017">
    <property type="term" value="F:microtubule binding"/>
    <property type="evidence" value="ECO:0000318"/>
    <property type="project" value="GO_Central"/>
</dbReference>
<dbReference type="FunFam" id="1.25.40.10:FF:002154">
    <property type="entry name" value="regulator of microtubule dynamics protein 1"/>
    <property type="match status" value="1"/>
</dbReference>
<dbReference type="Gene3D" id="1.25.40.10">
    <property type="entry name" value="Tetratricopeptide repeat domain"/>
    <property type="match status" value="1"/>
</dbReference>
<dbReference type="InterPro" id="IPR049039">
    <property type="entry name" value="RMD1-3_a_helical_rpt"/>
</dbReference>
<dbReference type="InterPro" id="IPR011990">
    <property type="entry name" value="TPR-like_helical_dom_sf"/>
</dbReference>
<dbReference type="PANTHER" id="PTHR16056">
    <property type="entry name" value="REGULATOR OF MICROTUBULE DYNAMICS PROTEIN"/>
    <property type="match status" value="1"/>
</dbReference>
<dbReference type="PANTHER" id="PTHR16056:SF16">
    <property type="entry name" value="REGULATOR OF MICROTUBULE DYNAMICS PROTEIN 1"/>
    <property type="match status" value="1"/>
</dbReference>
<dbReference type="Pfam" id="PF21033">
    <property type="entry name" value="RMD1-3"/>
    <property type="match status" value="1"/>
</dbReference>
<dbReference type="SUPFAM" id="SSF48452">
    <property type="entry name" value="TPR-like"/>
    <property type="match status" value="1"/>
</dbReference>
<sequence>MALAVRFWCLFPVGRSAAWGLRLPAGAAGSRGQRVPWRLGASEAMGNSGTFKRSLLFSALSYLGFETYQVISQAVLVHAAAKVFEIEEVLEQADYLYESGETEKLYQLLTQYKESEDAELLWRLARASRDVAQLSGTSEEEKKFLVYEALEYAKRALEKNESSCAAHKWYAICIGDVGDYEGIKAKIANAYIIKEHFEKAIELNPKDATSIHLMGIWCYTVAEMPWYQRRIAKVLFATPPGSTYEEALGYFHRAEQVDPNFYSKNLLLLGKTYLKLHNKKLAAFWLTKAKDYPAHTEEDKQIQTEAAQLLRGFSDKN</sequence>
<organism>
    <name type="scientific">Bos taurus</name>
    <name type="common">Bovine</name>
    <dbReference type="NCBI Taxonomy" id="9913"/>
    <lineage>
        <taxon>Eukaryota</taxon>
        <taxon>Metazoa</taxon>
        <taxon>Chordata</taxon>
        <taxon>Craniata</taxon>
        <taxon>Vertebrata</taxon>
        <taxon>Euteleostomi</taxon>
        <taxon>Mammalia</taxon>
        <taxon>Eutheria</taxon>
        <taxon>Laurasiatheria</taxon>
        <taxon>Artiodactyla</taxon>
        <taxon>Ruminantia</taxon>
        <taxon>Pecora</taxon>
        <taxon>Bovidae</taxon>
        <taxon>Bovinae</taxon>
        <taxon>Bos</taxon>
    </lineage>
</organism>
<evidence type="ECO:0000250" key="1"/>
<evidence type="ECO:0000250" key="2">
    <source>
        <dbReference type="UniProtKB" id="Q9DCV4"/>
    </source>
</evidence>
<evidence type="ECO:0000305" key="3"/>
<proteinExistence type="evidence at transcript level"/>
<comment type="subunit">
    <text evidence="1">Interacts with microtubules.</text>
</comment>
<comment type="subcellular location">
    <subcellularLocation>
        <location evidence="1">Cytoplasm</location>
        <location evidence="1">Cytoskeleton</location>
    </subcellularLocation>
    <subcellularLocation>
        <location evidence="1">Cytoplasm</location>
        <location evidence="1">Cytoskeleton</location>
        <location evidence="1">Spindle</location>
    </subcellularLocation>
    <subcellularLocation>
        <location evidence="1">Cytoplasm</location>
        <location evidence="1">Cytoskeleton</location>
        <location evidence="1">Spindle pole</location>
    </subcellularLocation>
    <text evidence="1">In interphase localizes in the cytoplasm, and during mitosis localizes to the spindle microtubules and spindle poles.</text>
</comment>
<comment type="similarity">
    <text evidence="3">Belongs to the RMDN family.</text>
</comment>
<gene>
    <name type="primary">RMDN1</name>
    <name type="synonym">FAM82B</name>
</gene>
<name>RMD1_BOVIN</name>